<organism>
    <name type="scientific">Aspergillus niger (strain ATCC MYA-4892 / CBS 513.88 / FGSC A1513)</name>
    <dbReference type="NCBI Taxonomy" id="425011"/>
    <lineage>
        <taxon>Eukaryota</taxon>
        <taxon>Fungi</taxon>
        <taxon>Dikarya</taxon>
        <taxon>Ascomycota</taxon>
        <taxon>Pezizomycotina</taxon>
        <taxon>Eurotiomycetes</taxon>
        <taxon>Eurotiomycetidae</taxon>
        <taxon>Eurotiales</taxon>
        <taxon>Aspergillaceae</taxon>
        <taxon>Aspergillus</taxon>
        <taxon>Aspergillus subgen. Circumdati</taxon>
    </lineage>
</organism>
<sequence length="1270" mass="139419">MGHSRRPAGGEKKSRGFGRSKAAADVGDGRQAGKPQVKKAVFESTKKKEIGVSDLTLLSKISNEAINDNLKLRFEHDEIYTYIGHVLVSVNPFRDLGIYTDRVLESYRGKNRLEVPPHVFAVAESAYYNMKSYKDNQCVIISGESGAGKTEAAKRIMQYIASVSGGSDSSIQQTKDMVLATNPLLESFGNAKTLRNNNSSRFGKYLELEFNTNGEPVGANITNYLLEKSRVVGQITNERNFHIFYQFTKAAPQKYRDMFGIQQPQSYLYTSRSKCYDVPGVDDAAEFRDTINAMGVIGMTEAEQDEVFRMLAAILWIGNIQFAEDDSGNAAITDQSVVDFVAYLLEVDAAQVNKALTIRLMETARGGRRGSVYEVPLNTVQALAVRDALSKAIYFNLFDWIVGRVNSSLTARGSVANSIGILDIYGFEIFEKNSFEQLCINYVNEKLQQIFIQLTLKAEQDEYAREQIQWTPIKYFDNKVVCSLIEDKRPPGVFAALNDACATAHADSGAADNTFVGRLNFLGQNPNFESRQGQFIVKHYAGDVSYAVEGMTDKNKDQLLKDLLNLAGSSSNQFVHTLFPNQVNQDDKRRPPTASDKIKASANDLVATLMKAQPSYIRTIKPNDNKAPREYNQGNVLHQIKYLGLQENVRIRRAGFAYRQTFDKFVERFYLLSPKTSYAGDYTWTGDEESGARQILKDTSIPAEEYQMGITKVFVKTPETLFALETMRDRYWHNMAIRIQRAWRNYLRYRIECAIRIQRFWRRMTGGLEFIKLRDQGHQVLQGKKERRRMSLLGSRRFLGDYVGVGNKGGPGEMIHNGAGINGSENILFSCRGEVLISKFGRSSKPAPRIFVLLTTQTNRHVYIVAQTLVNNQLQIASERTIPIGAIKSVSTSNLKDDWFSLVVGGQEPDPLMNCVFKTEFFTHLTNALRGQLNLKIADHIEYNKKPGKLATVKVVKDPGASNVDSYKSSTIHTSAGEPPSSVSKPTPRPKQVAARPVTKGKLLRPGGPGGGPSKLASRPAPARQPMPQPTPQPAAVQPPPAPRPAVSPAAQPRPVPQPVAAVAAAQHTRNASSSSTRAPPPPPPATPPAAQRKPMAKVLYDFNSDQSNELSIRAGDLVQIVSKEGNGWWLCMNTTTSVQGWTPEAYLEEQVAASPKPAPPPPPPAAPRASPVPATNGAAAAVAAKAKAKPAPPAPPAKRPNMAGRKVAPAPPAAPRDSAVSMNSHDSSGGSGRGTPNSASNASLAGGLAEALKARQHAMQGHHDEDDEW</sequence>
<evidence type="ECO:0000250" key="1"/>
<evidence type="ECO:0000255" key="2"/>
<evidence type="ECO:0000255" key="3">
    <source>
        <dbReference type="PROSITE-ProRule" id="PRU00192"/>
    </source>
</evidence>
<evidence type="ECO:0000255" key="4">
    <source>
        <dbReference type="PROSITE-ProRule" id="PRU00782"/>
    </source>
</evidence>
<evidence type="ECO:0000255" key="5">
    <source>
        <dbReference type="PROSITE-ProRule" id="PRU01093"/>
    </source>
</evidence>
<evidence type="ECO:0000256" key="6">
    <source>
        <dbReference type="SAM" id="MobiDB-lite"/>
    </source>
</evidence>
<evidence type="ECO:0000305" key="7"/>
<gene>
    <name type="primary">myoA</name>
    <name type="ORF">An15g04490</name>
</gene>
<name>MYO1_ASPNC</name>
<reference key="1">
    <citation type="journal article" date="2007" name="Nat. Biotechnol.">
        <title>Genome sequencing and analysis of the versatile cell factory Aspergillus niger CBS 513.88.</title>
        <authorList>
            <person name="Pel H.J."/>
            <person name="de Winde J.H."/>
            <person name="Archer D.B."/>
            <person name="Dyer P.S."/>
            <person name="Hofmann G."/>
            <person name="Schaap P.J."/>
            <person name="Turner G."/>
            <person name="de Vries R.P."/>
            <person name="Albang R."/>
            <person name="Albermann K."/>
            <person name="Andersen M.R."/>
            <person name="Bendtsen J.D."/>
            <person name="Benen J.A.E."/>
            <person name="van den Berg M."/>
            <person name="Breestraat S."/>
            <person name="Caddick M.X."/>
            <person name="Contreras R."/>
            <person name="Cornell M."/>
            <person name="Coutinho P.M."/>
            <person name="Danchin E.G.J."/>
            <person name="Debets A.J.M."/>
            <person name="Dekker P."/>
            <person name="van Dijck P.W.M."/>
            <person name="van Dijk A."/>
            <person name="Dijkhuizen L."/>
            <person name="Driessen A.J.M."/>
            <person name="d'Enfert C."/>
            <person name="Geysens S."/>
            <person name="Goosen C."/>
            <person name="Groot G.S.P."/>
            <person name="de Groot P.W.J."/>
            <person name="Guillemette T."/>
            <person name="Henrissat B."/>
            <person name="Herweijer M."/>
            <person name="van den Hombergh J.P.T.W."/>
            <person name="van den Hondel C.A.M.J.J."/>
            <person name="van der Heijden R.T.J.M."/>
            <person name="van der Kaaij R.M."/>
            <person name="Klis F.M."/>
            <person name="Kools H.J."/>
            <person name="Kubicek C.P."/>
            <person name="van Kuyk P.A."/>
            <person name="Lauber J."/>
            <person name="Lu X."/>
            <person name="van der Maarel M.J.E.C."/>
            <person name="Meulenberg R."/>
            <person name="Menke H."/>
            <person name="Mortimer M.A."/>
            <person name="Nielsen J."/>
            <person name="Oliver S.G."/>
            <person name="Olsthoorn M."/>
            <person name="Pal K."/>
            <person name="van Peij N.N.M.E."/>
            <person name="Ram A.F.J."/>
            <person name="Rinas U."/>
            <person name="Roubos J.A."/>
            <person name="Sagt C.M.J."/>
            <person name="Schmoll M."/>
            <person name="Sun J."/>
            <person name="Ussery D."/>
            <person name="Varga J."/>
            <person name="Vervecken W."/>
            <person name="van de Vondervoort P.J.J."/>
            <person name="Wedler H."/>
            <person name="Woesten H.A.B."/>
            <person name="Zeng A.-P."/>
            <person name="van Ooyen A.J.J."/>
            <person name="Visser J."/>
            <person name="Stam H."/>
        </authorList>
    </citation>
    <scope>NUCLEOTIDE SEQUENCE [LARGE SCALE GENOMIC DNA]</scope>
    <source>
        <strain>ATCC MYA-4892 / CBS 513.88 / FGSC A1513</strain>
    </source>
</reference>
<protein>
    <recommendedName>
        <fullName>Myosin-1</fullName>
    </recommendedName>
    <alternativeName>
        <fullName>Class I unconventional myosin</fullName>
    </alternativeName>
    <alternativeName>
        <fullName>Type I myosin</fullName>
    </alternativeName>
</protein>
<proteinExistence type="inferred from homology"/>
<comment type="function">
    <text evidence="1">Type-I myosin implicated in the organization of the actin cytoskeleton. Required for proper actin cytoskeleton polarization. At the cell cortex, assembles in patch-like structures together with proteins from the actin-polymerizing machinery and promotes actin assembly. Functions as actin nucleation-promoting factor (NPF) for the Arp2/3 complex. Plays an important role in polarized growth, spore germination, hyphal morphogenesis, and septal wall formation (By similarity).</text>
</comment>
<comment type="subcellular location">
    <subcellularLocation>
        <location evidence="1">Cytoplasm</location>
        <location evidence="1">Cytoskeleton</location>
        <location evidence="1">Actin patch</location>
    </subcellularLocation>
    <text evidence="1">Localizes to cortical patch-like structures. Enriched at sites of polarized growth, like the growing hyphal tips and sites of septum formation (By similarity).</text>
</comment>
<comment type="domain">
    <text evidence="1">The myosin motor domain displays actin-stimulated ATPase activity and generates a mechanochemical force.</text>
</comment>
<comment type="domain">
    <text evidence="1">The tail domain participates in molecular interactions that specify the role of the motor domain (By similarity). It is composed of several tail homology (TH) domains, namely a putative phospholipid-binding myosin tail domain (also named TH1), an Ala- and Pro-rich domain (TH2), followed by an SH3 domain and a C-terminal acidic domain (TH3).</text>
</comment>
<comment type="PTM">
    <text evidence="1">Phosphorylation of the TEDS site (Ser-371) is required for the polarization of the actin cytoskeleton. Phosphorylation probably activates the myosin-I ATPase activity (By similarity).</text>
</comment>
<comment type="similarity">
    <text evidence="7">Belongs to the TRAFAC class myosin-kinesin ATPase superfamily. Myosin family.</text>
</comment>
<accession>A2R5J1</accession>
<dbReference type="EMBL" id="AM270343">
    <property type="protein sequence ID" value="CAK97316.1"/>
    <property type="molecule type" value="Genomic_DNA"/>
</dbReference>
<dbReference type="SMR" id="A2R5J1"/>
<dbReference type="EnsemblFungi" id="CAK97316">
    <property type="protein sequence ID" value="CAK97316"/>
    <property type="gene ID" value="An15g04490"/>
</dbReference>
<dbReference type="HOGENOM" id="CLU_000192_7_6_1"/>
<dbReference type="Proteomes" id="UP000006706">
    <property type="component" value="Chromosome 3R"/>
</dbReference>
<dbReference type="GO" id="GO:0030479">
    <property type="term" value="C:actin cortical patch"/>
    <property type="evidence" value="ECO:0007669"/>
    <property type="project" value="UniProtKB-SubCell"/>
</dbReference>
<dbReference type="GO" id="GO:0051285">
    <property type="term" value="C:cell cortex of cell tip"/>
    <property type="evidence" value="ECO:0007669"/>
    <property type="project" value="EnsemblFungi"/>
</dbReference>
<dbReference type="GO" id="GO:0043332">
    <property type="term" value="C:mating projection tip"/>
    <property type="evidence" value="ECO:0007669"/>
    <property type="project" value="EnsemblFungi"/>
</dbReference>
<dbReference type="GO" id="GO:0031097">
    <property type="term" value="C:medial cortex"/>
    <property type="evidence" value="ECO:0007669"/>
    <property type="project" value="EnsemblFungi"/>
</dbReference>
<dbReference type="GO" id="GO:0045160">
    <property type="term" value="C:myosin I complex"/>
    <property type="evidence" value="ECO:0007669"/>
    <property type="project" value="EnsemblFungi"/>
</dbReference>
<dbReference type="GO" id="GO:0044853">
    <property type="term" value="C:plasma membrane raft"/>
    <property type="evidence" value="ECO:0007669"/>
    <property type="project" value="EnsemblFungi"/>
</dbReference>
<dbReference type="GO" id="GO:0005628">
    <property type="term" value="C:prospore membrane"/>
    <property type="evidence" value="ECO:0007669"/>
    <property type="project" value="EnsemblFungi"/>
</dbReference>
<dbReference type="GO" id="GO:0051015">
    <property type="term" value="F:actin filament binding"/>
    <property type="evidence" value="ECO:0007669"/>
    <property type="project" value="EnsemblFungi"/>
</dbReference>
<dbReference type="GO" id="GO:0071933">
    <property type="term" value="F:Arp2/3 complex binding"/>
    <property type="evidence" value="ECO:0007669"/>
    <property type="project" value="EnsemblFungi"/>
</dbReference>
<dbReference type="GO" id="GO:0005524">
    <property type="term" value="F:ATP binding"/>
    <property type="evidence" value="ECO:0007669"/>
    <property type="project" value="UniProtKB-KW"/>
</dbReference>
<dbReference type="GO" id="GO:0016787">
    <property type="term" value="F:hydrolase activity"/>
    <property type="evidence" value="ECO:0007669"/>
    <property type="project" value="UniProtKB-KW"/>
</dbReference>
<dbReference type="GO" id="GO:0000146">
    <property type="term" value="F:microfilament motor activity"/>
    <property type="evidence" value="ECO:0007669"/>
    <property type="project" value="EnsemblFungi"/>
</dbReference>
<dbReference type="GO" id="GO:0000147">
    <property type="term" value="P:actin cortical patch assembly"/>
    <property type="evidence" value="ECO:0007669"/>
    <property type="project" value="EnsemblFungi"/>
</dbReference>
<dbReference type="GO" id="GO:0051666">
    <property type="term" value="P:actin cortical patch localization"/>
    <property type="evidence" value="ECO:0007669"/>
    <property type="project" value="TreeGrafter"/>
</dbReference>
<dbReference type="GO" id="GO:0007015">
    <property type="term" value="P:actin filament organization"/>
    <property type="evidence" value="ECO:0007669"/>
    <property type="project" value="TreeGrafter"/>
</dbReference>
<dbReference type="GO" id="GO:0006897">
    <property type="term" value="P:endocytosis"/>
    <property type="evidence" value="ECO:0007669"/>
    <property type="project" value="EnsemblFungi"/>
</dbReference>
<dbReference type="GO" id="GO:0000281">
    <property type="term" value="P:mitotic cytokinesis"/>
    <property type="evidence" value="ECO:0007669"/>
    <property type="project" value="EnsemblFungi"/>
</dbReference>
<dbReference type="CDD" id="cd01378">
    <property type="entry name" value="MYSc_Myo1"/>
    <property type="match status" value="1"/>
</dbReference>
<dbReference type="CDD" id="cd11858">
    <property type="entry name" value="SH3_Myosin-I_fungi"/>
    <property type="match status" value="1"/>
</dbReference>
<dbReference type="FunFam" id="1.10.10.820:FF:000001">
    <property type="entry name" value="Myosin heavy chain"/>
    <property type="match status" value="1"/>
</dbReference>
<dbReference type="FunFam" id="1.20.120.720:FF:000015">
    <property type="entry name" value="Myosin I"/>
    <property type="match status" value="1"/>
</dbReference>
<dbReference type="FunFam" id="2.30.30.40:FF:000254">
    <property type="entry name" value="Myosin I MyoA/Myo5"/>
    <property type="match status" value="1"/>
</dbReference>
<dbReference type="FunFam" id="1.20.5.4820:FF:000004">
    <property type="entry name" value="Myosin IE"/>
    <property type="match status" value="1"/>
</dbReference>
<dbReference type="FunFam" id="1.20.58.530:FF:000007">
    <property type="entry name" value="Myosin IE"/>
    <property type="match status" value="1"/>
</dbReference>
<dbReference type="Gene3D" id="1.10.10.820">
    <property type="match status" value="1"/>
</dbReference>
<dbReference type="Gene3D" id="1.20.5.4820">
    <property type="match status" value="1"/>
</dbReference>
<dbReference type="Gene3D" id="1.20.58.530">
    <property type="match status" value="1"/>
</dbReference>
<dbReference type="Gene3D" id="3.40.850.10">
    <property type="entry name" value="Kinesin motor domain"/>
    <property type="match status" value="1"/>
</dbReference>
<dbReference type="Gene3D" id="1.20.120.720">
    <property type="entry name" value="Myosin VI head, motor domain, U50 subdomain"/>
    <property type="match status" value="1"/>
</dbReference>
<dbReference type="Gene3D" id="2.30.30.40">
    <property type="entry name" value="SH3 Domains"/>
    <property type="match status" value="1"/>
</dbReference>
<dbReference type="InterPro" id="IPR035535">
    <property type="entry name" value="Fungal_myosin-I_SH3"/>
</dbReference>
<dbReference type="InterPro" id="IPR036961">
    <property type="entry name" value="Kinesin_motor_dom_sf"/>
</dbReference>
<dbReference type="InterPro" id="IPR054489">
    <property type="entry name" value="Myo1_CA"/>
</dbReference>
<dbReference type="InterPro" id="IPR001609">
    <property type="entry name" value="Myosin_head_motor_dom-like"/>
</dbReference>
<dbReference type="InterPro" id="IPR010926">
    <property type="entry name" value="Myosin_TH1"/>
</dbReference>
<dbReference type="InterPro" id="IPR036072">
    <property type="entry name" value="MYSc_Myo1"/>
</dbReference>
<dbReference type="InterPro" id="IPR027417">
    <property type="entry name" value="P-loop_NTPase"/>
</dbReference>
<dbReference type="InterPro" id="IPR036028">
    <property type="entry name" value="SH3-like_dom_sf"/>
</dbReference>
<dbReference type="InterPro" id="IPR001452">
    <property type="entry name" value="SH3_domain"/>
</dbReference>
<dbReference type="PANTHER" id="PTHR13140">
    <property type="entry name" value="MYOSIN"/>
    <property type="match status" value="1"/>
</dbReference>
<dbReference type="PANTHER" id="PTHR13140:SF837">
    <property type="entry name" value="MYOSIN-3-RELATED"/>
    <property type="match status" value="1"/>
</dbReference>
<dbReference type="Pfam" id="PF22773">
    <property type="entry name" value="Myo1_CA"/>
    <property type="match status" value="1"/>
</dbReference>
<dbReference type="Pfam" id="PF00063">
    <property type="entry name" value="Myosin_head"/>
    <property type="match status" value="1"/>
</dbReference>
<dbReference type="Pfam" id="PF06017">
    <property type="entry name" value="Myosin_TH1"/>
    <property type="match status" value="1"/>
</dbReference>
<dbReference type="Pfam" id="PF00018">
    <property type="entry name" value="SH3_1"/>
    <property type="match status" value="1"/>
</dbReference>
<dbReference type="PRINTS" id="PR00193">
    <property type="entry name" value="MYOSINHEAVY"/>
</dbReference>
<dbReference type="SMART" id="SM00242">
    <property type="entry name" value="MYSc"/>
    <property type="match status" value="1"/>
</dbReference>
<dbReference type="SMART" id="SM00326">
    <property type="entry name" value="SH3"/>
    <property type="match status" value="1"/>
</dbReference>
<dbReference type="SUPFAM" id="SSF52540">
    <property type="entry name" value="P-loop containing nucleoside triphosphate hydrolases"/>
    <property type="match status" value="1"/>
</dbReference>
<dbReference type="SUPFAM" id="SSF50044">
    <property type="entry name" value="SH3-domain"/>
    <property type="match status" value="1"/>
</dbReference>
<dbReference type="PROSITE" id="PS51456">
    <property type="entry name" value="MYOSIN_MOTOR"/>
    <property type="match status" value="1"/>
</dbReference>
<dbReference type="PROSITE" id="PS50002">
    <property type="entry name" value="SH3"/>
    <property type="match status" value="1"/>
</dbReference>
<dbReference type="PROSITE" id="PS51757">
    <property type="entry name" value="TH1"/>
    <property type="match status" value="1"/>
</dbReference>
<keyword id="KW-0009">Actin-binding</keyword>
<keyword id="KW-0067">ATP-binding</keyword>
<keyword id="KW-0963">Cytoplasm</keyword>
<keyword id="KW-0206">Cytoskeleton</keyword>
<keyword id="KW-0378">Hydrolase</keyword>
<keyword id="KW-0505">Motor protein</keyword>
<keyword id="KW-0518">Myosin</keyword>
<keyword id="KW-0547">Nucleotide-binding</keyword>
<keyword id="KW-0597">Phosphoprotein</keyword>
<keyword id="KW-1185">Reference proteome</keyword>
<keyword id="KW-0677">Repeat</keyword>
<keyword id="KW-0728">SH3 domain</keyword>
<feature type="chain" id="PRO_0000338539" description="Myosin-1">
    <location>
        <begin position="1"/>
        <end position="1270"/>
    </location>
</feature>
<feature type="domain" description="Myosin motor" evidence="4">
    <location>
        <begin position="50"/>
        <end position="729"/>
    </location>
</feature>
<feature type="domain" description="IQ 1">
    <location>
        <begin position="733"/>
        <end position="753"/>
    </location>
</feature>
<feature type="domain" description="IQ 2">
    <location>
        <begin position="754"/>
        <end position="779"/>
    </location>
</feature>
<feature type="domain" description="TH1" evidence="5">
    <location>
        <begin position="787"/>
        <end position="980"/>
    </location>
</feature>
<feature type="domain" description="SH3" evidence="3">
    <location>
        <begin position="1092"/>
        <end position="1153"/>
    </location>
</feature>
<feature type="region of interest" description="Disordered" evidence="6">
    <location>
        <begin position="1"/>
        <end position="40"/>
    </location>
</feature>
<feature type="region of interest" description="Actin-binding" evidence="1">
    <location>
        <begin position="418"/>
        <end position="500"/>
    </location>
</feature>
<feature type="region of interest" description="Disordered" evidence="6">
    <location>
        <begin position="960"/>
        <end position="1102"/>
    </location>
</feature>
<feature type="region of interest" description="Disordered" evidence="6">
    <location>
        <begin position="1144"/>
        <end position="1270"/>
    </location>
</feature>
<feature type="compositionally biased region" description="Polar residues" evidence="6">
    <location>
        <begin position="963"/>
        <end position="974"/>
    </location>
</feature>
<feature type="compositionally biased region" description="Pro residues" evidence="6">
    <location>
        <begin position="1023"/>
        <end position="1058"/>
    </location>
</feature>
<feature type="compositionally biased region" description="Low complexity" evidence="6">
    <location>
        <begin position="1059"/>
        <end position="1078"/>
    </location>
</feature>
<feature type="compositionally biased region" description="Pro residues" evidence="6">
    <location>
        <begin position="1079"/>
        <end position="1088"/>
    </location>
</feature>
<feature type="compositionally biased region" description="Pro residues" evidence="6">
    <location>
        <begin position="1157"/>
        <end position="1167"/>
    </location>
</feature>
<feature type="compositionally biased region" description="Low complexity" evidence="6">
    <location>
        <begin position="1168"/>
        <end position="1186"/>
    </location>
</feature>
<feature type="compositionally biased region" description="Low complexity" evidence="6">
    <location>
        <begin position="1238"/>
        <end position="1252"/>
    </location>
</feature>
<feature type="binding site" evidence="2">
    <location>
        <begin position="143"/>
        <end position="150"/>
    </location>
    <ligand>
        <name>ATP</name>
        <dbReference type="ChEBI" id="CHEBI:30616"/>
    </ligand>
</feature>
<feature type="modified residue" description="Phosphoserine" evidence="1">
    <location>
        <position position="371"/>
    </location>
</feature>